<feature type="chain" id="PRO_0000204235" description="Regulator of G-protein signaling 20">
    <location>
        <begin position="1"/>
        <end position="218"/>
    </location>
</feature>
<feature type="domain" description="RGS" evidence="2">
    <location>
        <begin position="92"/>
        <end position="208"/>
    </location>
</feature>
<feature type="region of interest" description="Disordered" evidence="3">
    <location>
        <begin position="1"/>
        <end position="26"/>
    </location>
</feature>
<feature type="compositionally biased region" description="Basic and acidic residues" evidence="3">
    <location>
        <begin position="1"/>
        <end position="10"/>
    </location>
</feature>
<feature type="compositionally biased region" description="Polar residues" evidence="3">
    <location>
        <begin position="14"/>
        <end position="26"/>
    </location>
</feature>
<sequence>MGSERTEMRKRQMAATQETPGTAQAQHSVGNRGPNACCFCWCCCCSCSCLTVRNQEEERARRTSHELQAEGIPNCEESPAPTLEEVNAWAQSFDKLMLTPAGRNAFREFLRTEFSEENMLFWMACEELKQESNKSVIEEKARLIYEDYISILSPKEVSLDSRVREVINRNMLEPSQHTFDDAQLQIYTLMHRDSYPRFMNSAIYKDLLRSLSEKSIEA</sequence>
<protein>
    <recommendedName>
        <fullName>Regulator of G-protein signaling 20</fullName>
        <shortName>RGS20</shortName>
    </recommendedName>
    <alternativeName>
        <fullName>Gz-selective GTPase-activating protein</fullName>
        <shortName>G(z)GAP</shortName>
        <shortName>Gz-GAP</shortName>
    </alternativeName>
</protein>
<dbReference type="EMBL" id="AF151967">
    <property type="protein sequence ID" value="AAD45947.1"/>
    <property type="molecule type" value="mRNA"/>
</dbReference>
<dbReference type="RefSeq" id="NP_990173.1">
    <property type="nucleotide sequence ID" value="NM_204842.3"/>
</dbReference>
<dbReference type="RefSeq" id="XP_025002800.1">
    <property type="nucleotide sequence ID" value="XM_025147032.3"/>
</dbReference>
<dbReference type="RefSeq" id="XP_046766287.1">
    <property type="nucleotide sequence ID" value="XM_046910331.1"/>
</dbReference>
<dbReference type="SMR" id="Q9PWA1"/>
<dbReference type="FunCoup" id="Q9PWA1">
    <property type="interactions" value="476"/>
</dbReference>
<dbReference type="STRING" id="9031.ENSGALP00000041794"/>
<dbReference type="PaxDb" id="9031-ENSGALP00000041794"/>
<dbReference type="Ensembl" id="ENSGALT00010010291.1">
    <property type="protein sequence ID" value="ENSGALP00010006020.1"/>
    <property type="gene ID" value="ENSGALG00010004404.1"/>
</dbReference>
<dbReference type="GeneID" id="395646"/>
<dbReference type="KEGG" id="gga:395646"/>
<dbReference type="CTD" id="8601"/>
<dbReference type="VEuPathDB" id="HostDB:geneid_395646"/>
<dbReference type="eggNOG" id="KOG3589">
    <property type="taxonomic scope" value="Eukaryota"/>
</dbReference>
<dbReference type="GeneTree" id="ENSGT00940000159123"/>
<dbReference type="HOGENOM" id="CLU_059863_0_2_1"/>
<dbReference type="InParanoid" id="Q9PWA1"/>
<dbReference type="OrthoDB" id="10266999at2759"/>
<dbReference type="PhylomeDB" id="Q9PWA1"/>
<dbReference type="Reactome" id="R-GGA-418594">
    <property type="pathway name" value="G alpha (i) signalling events"/>
</dbReference>
<dbReference type="Reactome" id="R-GGA-418597">
    <property type="pathway name" value="G alpha (z) signalling events"/>
</dbReference>
<dbReference type="PRO" id="PR:Q9PWA1"/>
<dbReference type="Proteomes" id="UP000000539">
    <property type="component" value="Chromosome 2"/>
</dbReference>
<dbReference type="Bgee" id="ENSGALG00000025941">
    <property type="expression patterns" value="Expressed in brain and 7 other cell types or tissues"/>
</dbReference>
<dbReference type="GO" id="GO:0005737">
    <property type="term" value="C:cytoplasm"/>
    <property type="evidence" value="ECO:0007669"/>
    <property type="project" value="UniProtKB-SubCell"/>
</dbReference>
<dbReference type="GO" id="GO:0016020">
    <property type="term" value="C:membrane"/>
    <property type="evidence" value="ECO:0007669"/>
    <property type="project" value="UniProtKB-SubCell"/>
</dbReference>
<dbReference type="GO" id="GO:0005634">
    <property type="term" value="C:nucleus"/>
    <property type="evidence" value="ECO:0007669"/>
    <property type="project" value="UniProtKB-SubCell"/>
</dbReference>
<dbReference type="GO" id="GO:0009968">
    <property type="term" value="P:negative regulation of signal transduction"/>
    <property type="evidence" value="ECO:0007669"/>
    <property type="project" value="UniProtKB-KW"/>
</dbReference>
<dbReference type="CDD" id="cd08746">
    <property type="entry name" value="RGS_RGS20"/>
    <property type="match status" value="1"/>
</dbReference>
<dbReference type="FunFam" id="1.10.167.10:FF:000015">
    <property type="entry name" value="Regulator of G-protein signaling 17"/>
    <property type="match status" value="1"/>
</dbReference>
<dbReference type="FunFam" id="1.10.196.10:FF:000001">
    <property type="entry name" value="Regulator of G-protein signaling 8"/>
    <property type="match status" value="1"/>
</dbReference>
<dbReference type="Gene3D" id="1.10.167.10">
    <property type="entry name" value="Regulator of G-protein Signalling 4, domain 2"/>
    <property type="match status" value="1"/>
</dbReference>
<dbReference type="InterPro" id="IPR016137">
    <property type="entry name" value="RGS"/>
</dbReference>
<dbReference type="InterPro" id="IPR036305">
    <property type="entry name" value="RGS_sf"/>
</dbReference>
<dbReference type="InterPro" id="IPR044926">
    <property type="entry name" value="RGS_subdomain_2"/>
</dbReference>
<dbReference type="PANTHER" id="PTHR10845">
    <property type="entry name" value="REGULATOR OF G PROTEIN SIGNALING"/>
    <property type="match status" value="1"/>
</dbReference>
<dbReference type="PANTHER" id="PTHR10845:SF277">
    <property type="entry name" value="REGULATOR OF G-PROTEIN SIGNALING 20"/>
    <property type="match status" value="1"/>
</dbReference>
<dbReference type="Pfam" id="PF00615">
    <property type="entry name" value="RGS"/>
    <property type="match status" value="1"/>
</dbReference>
<dbReference type="PRINTS" id="PR01301">
    <property type="entry name" value="RGSPROTEIN"/>
</dbReference>
<dbReference type="SMART" id="SM00315">
    <property type="entry name" value="RGS"/>
    <property type="match status" value="1"/>
</dbReference>
<dbReference type="SUPFAM" id="SSF48097">
    <property type="entry name" value="Regulator of G-protein signaling, RGS"/>
    <property type="match status" value="1"/>
</dbReference>
<dbReference type="PROSITE" id="PS50132">
    <property type="entry name" value="RGS"/>
    <property type="match status" value="1"/>
</dbReference>
<organism>
    <name type="scientific">Gallus gallus</name>
    <name type="common">Chicken</name>
    <dbReference type="NCBI Taxonomy" id="9031"/>
    <lineage>
        <taxon>Eukaryota</taxon>
        <taxon>Metazoa</taxon>
        <taxon>Chordata</taxon>
        <taxon>Craniata</taxon>
        <taxon>Vertebrata</taxon>
        <taxon>Euteleostomi</taxon>
        <taxon>Archelosauria</taxon>
        <taxon>Archosauria</taxon>
        <taxon>Dinosauria</taxon>
        <taxon>Saurischia</taxon>
        <taxon>Theropoda</taxon>
        <taxon>Coelurosauria</taxon>
        <taxon>Aves</taxon>
        <taxon>Neognathae</taxon>
        <taxon>Galloanserae</taxon>
        <taxon>Galliformes</taxon>
        <taxon>Phasianidae</taxon>
        <taxon>Phasianinae</taxon>
        <taxon>Gallus</taxon>
    </lineage>
</organism>
<gene>
    <name type="primary">RGS20</name>
</gene>
<comment type="function">
    <text evidence="1">Inhibits signal transduction by increasing the GTPase activity of G protein alpha subunits thereby driving them into their inactive GDP-bound form. Binds selectively to G(z)-alpha and G(alpha)-i2 subunits, accelerates their GTPase activity and regulates their signaling activities. The G(z)-alpha activity is inhibited by the phosphorylation and palmitoylation of the G-protein. Negatively regulates mu-opioid receptor-mediated activation of the G-proteins (By similarity).</text>
</comment>
<comment type="subunit">
    <text evidence="1">Forms a complex with G(alpha)z/i2 subunits and mu-opioid receptors; the formation of this complex results in mu-opioid receptor desensitization. Interacts with OPRM1 (By similarity).</text>
</comment>
<comment type="subcellular location">
    <subcellularLocation>
        <location>Membrane</location>
        <topology>Lipid-anchor</topology>
    </subcellularLocation>
    <subcellularLocation>
        <location>Nucleus</location>
    </subcellularLocation>
    <subcellularLocation>
        <location>Cytoplasm</location>
    </subcellularLocation>
    <text evidence="1">Shuttles between the cytoplasm/cell membrane and the nucleus. Anchored to the membrane through palmitoylation.</text>
</comment>
<comment type="PTM">
    <text evidence="1">Fatty acylated. Heavily palmitoylated in the cysteine string motif (By similarity).</text>
</comment>
<comment type="PTM">
    <text evidence="1">N- and O-glycosylated in synapsomal membranes.</text>
</comment>
<comment type="PTM">
    <text evidence="1">Sumoylated by SUMO1 and SUM02 in synaptosomes. The sumoylated forms act as a scaffold for sequestering mu-opioid receptor-activated G(alpha) subunits (By similarity).</text>
</comment>
<proteinExistence type="evidence at transcript level"/>
<name>RGS20_CHICK</name>
<reference key="1">
    <citation type="journal article" date="1999" name="J. Biol. Chem.">
        <title>Modulation of rap activity by direct interaction of Galpha(o) with Rap1 GTPase-activating protein.</title>
        <authorList>
            <person name="Jordan J.D."/>
            <person name="Carey K.D."/>
            <person name="Stork P.J.S."/>
            <person name="Iyengar R."/>
        </authorList>
    </citation>
    <scope>NUCLEOTIDE SEQUENCE [MRNA]</scope>
    <source>
        <tissue>Spinal ganglion</tissue>
    </source>
</reference>
<keyword id="KW-0963">Cytoplasm</keyword>
<keyword id="KW-0325">Glycoprotein</keyword>
<keyword id="KW-0449">Lipoprotein</keyword>
<keyword id="KW-0472">Membrane</keyword>
<keyword id="KW-0539">Nucleus</keyword>
<keyword id="KW-0564">Palmitate</keyword>
<keyword id="KW-1185">Reference proteome</keyword>
<keyword id="KW-0734">Signal transduction inhibitor</keyword>
<keyword id="KW-0832">Ubl conjugation</keyword>
<evidence type="ECO:0000250" key="1"/>
<evidence type="ECO:0000255" key="2">
    <source>
        <dbReference type="PROSITE-ProRule" id="PRU00171"/>
    </source>
</evidence>
<evidence type="ECO:0000256" key="3">
    <source>
        <dbReference type="SAM" id="MobiDB-lite"/>
    </source>
</evidence>
<accession>Q9PWA1</accession>